<protein>
    <recommendedName>
        <fullName evidence="2">Small ribosomal subunit protein uS15c</fullName>
    </recommendedName>
    <alternativeName>
        <fullName>30S ribosomal protein S15, chloroplastic</fullName>
    </alternativeName>
</protein>
<evidence type="ECO:0000250" key="1"/>
<evidence type="ECO:0000305" key="2"/>
<dbReference type="EMBL" id="EF380351">
    <property type="protein sequence ID" value="ABQ45307.1"/>
    <property type="molecule type" value="Genomic_DNA"/>
</dbReference>
<dbReference type="RefSeq" id="YP_001294242.1">
    <property type="nucleotide sequence ID" value="NC_009599.1"/>
</dbReference>
<dbReference type="SMR" id="A6MM94"/>
<dbReference type="GeneID" id="5236893"/>
<dbReference type="GO" id="GO:0009507">
    <property type="term" value="C:chloroplast"/>
    <property type="evidence" value="ECO:0007669"/>
    <property type="project" value="UniProtKB-SubCell"/>
</dbReference>
<dbReference type="GO" id="GO:1990904">
    <property type="term" value="C:ribonucleoprotein complex"/>
    <property type="evidence" value="ECO:0007669"/>
    <property type="project" value="UniProtKB-KW"/>
</dbReference>
<dbReference type="GO" id="GO:0005840">
    <property type="term" value="C:ribosome"/>
    <property type="evidence" value="ECO:0007669"/>
    <property type="project" value="UniProtKB-KW"/>
</dbReference>
<dbReference type="GO" id="GO:0003735">
    <property type="term" value="F:structural constituent of ribosome"/>
    <property type="evidence" value="ECO:0007669"/>
    <property type="project" value="InterPro"/>
</dbReference>
<dbReference type="GO" id="GO:0006412">
    <property type="term" value="P:translation"/>
    <property type="evidence" value="ECO:0007669"/>
    <property type="project" value="UniProtKB-UniRule"/>
</dbReference>
<dbReference type="CDD" id="cd00353">
    <property type="entry name" value="Ribosomal_S15p_S13e"/>
    <property type="match status" value="1"/>
</dbReference>
<dbReference type="Gene3D" id="1.10.287.10">
    <property type="entry name" value="S15/NS1, RNA-binding"/>
    <property type="match status" value="1"/>
</dbReference>
<dbReference type="HAMAP" id="MF_01343_B">
    <property type="entry name" value="Ribosomal_uS15_B"/>
    <property type="match status" value="1"/>
</dbReference>
<dbReference type="InterPro" id="IPR000589">
    <property type="entry name" value="Ribosomal_uS15"/>
</dbReference>
<dbReference type="InterPro" id="IPR005290">
    <property type="entry name" value="Ribosomal_uS15_bac-type"/>
</dbReference>
<dbReference type="InterPro" id="IPR009068">
    <property type="entry name" value="uS15_NS1_RNA-bd_sf"/>
</dbReference>
<dbReference type="NCBIfam" id="TIGR00952">
    <property type="entry name" value="S15_bact"/>
    <property type="match status" value="1"/>
</dbReference>
<dbReference type="PANTHER" id="PTHR23321">
    <property type="entry name" value="RIBOSOMAL PROTEIN S15, BACTERIAL AND ORGANELLAR"/>
    <property type="match status" value="1"/>
</dbReference>
<dbReference type="PANTHER" id="PTHR23321:SF26">
    <property type="entry name" value="SMALL RIBOSOMAL SUBUNIT PROTEIN US15M"/>
    <property type="match status" value="1"/>
</dbReference>
<dbReference type="Pfam" id="PF00312">
    <property type="entry name" value="Ribosomal_S15"/>
    <property type="match status" value="1"/>
</dbReference>
<dbReference type="SMART" id="SM01387">
    <property type="entry name" value="Ribosomal_S15"/>
    <property type="match status" value="1"/>
</dbReference>
<dbReference type="SUPFAM" id="SSF47060">
    <property type="entry name" value="S15/NS1 RNA-binding domain"/>
    <property type="match status" value="1"/>
</dbReference>
<dbReference type="PROSITE" id="PS00362">
    <property type="entry name" value="RIBOSOMAL_S15"/>
    <property type="match status" value="1"/>
</dbReference>
<accession>A6MM94</accession>
<name>RR15_BUXMI</name>
<sequence length="90" mass="10691">MVKNSFISVISQEKKEENKGSVEFQVFNFNNKIRILTSHLELHRKDYSSQRGLRKILGKRQRLLSYLSKKNRVRYKELIGQLGILEQKAR</sequence>
<keyword id="KW-0150">Chloroplast</keyword>
<keyword id="KW-0934">Plastid</keyword>
<keyword id="KW-0687">Ribonucleoprotein</keyword>
<keyword id="KW-0689">Ribosomal protein</keyword>
<geneLocation type="chloroplast"/>
<gene>
    <name type="primary">rps15</name>
</gene>
<feature type="chain" id="PRO_0000354240" description="Small ribosomal subunit protein uS15c">
    <location>
        <begin position="1"/>
        <end position="90"/>
    </location>
</feature>
<organism>
    <name type="scientific">Buxus microphylla</name>
    <name type="common">Littleleaf boxwood</name>
    <name type="synonym">Japanese boxwood</name>
    <dbReference type="NCBI Taxonomy" id="153571"/>
    <lineage>
        <taxon>Eukaryota</taxon>
        <taxon>Viridiplantae</taxon>
        <taxon>Streptophyta</taxon>
        <taxon>Embryophyta</taxon>
        <taxon>Tracheophyta</taxon>
        <taxon>Spermatophyta</taxon>
        <taxon>Magnoliopsida</taxon>
        <taxon>Buxales</taxon>
        <taxon>Buxaceae</taxon>
        <taxon>Buxus</taxon>
    </lineage>
</organism>
<comment type="subunit">
    <text evidence="1">Part of the 30S ribosomal subunit.</text>
</comment>
<comment type="subcellular location">
    <subcellularLocation>
        <location>Plastid</location>
        <location>Chloroplast</location>
    </subcellularLocation>
</comment>
<comment type="similarity">
    <text evidence="2">Belongs to the universal ribosomal protein uS15 family.</text>
</comment>
<proteinExistence type="inferred from homology"/>
<reference key="1">
    <citation type="journal article" date="2007" name="Mol. Phylogenet. Evol.">
        <title>Phylogenetic and evolutionary implications of complete chloroplast genome sequences of four early-diverging angiosperms: Buxus (Buxaceae), Chloranthus (Chloranthaceae), Dioscorea (Dioscoreaceae), and Illicium (Schisandraceae).</title>
        <authorList>
            <person name="Hansen D.R."/>
            <person name="Dastidar S.G."/>
            <person name="Cai Z."/>
            <person name="Penaflor C."/>
            <person name="Kuehl J.V."/>
            <person name="Boore J.L."/>
            <person name="Jansen R.K."/>
        </authorList>
    </citation>
    <scope>NUCLEOTIDE SEQUENCE [LARGE SCALE GENOMIC DNA]</scope>
</reference>